<protein>
    <recommendedName>
        <fullName evidence="6">Biotin transporter</fullName>
    </recommendedName>
    <alternativeName>
        <fullName evidence="6">Plasmamembrane biotin transport protein</fullName>
    </alternativeName>
</protein>
<accession>P0ADP5</accession>
<accession>P27849</accession>
<accession>Q2M8D2</accession>
<accession>Q8X5G7</accession>
<reference key="1">
    <citation type="journal article" date="1992" name="Science">
        <title>Analysis of the Escherichia coli genome: DNA sequence of the region from 84.5 to 86.5 minutes.</title>
        <authorList>
            <person name="Daniels D.L."/>
            <person name="Plunkett G. III"/>
            <person name="Burland V.D."/>
            <person name="Blattner F.R."/>
        </authorList>
    </citation>
    <scope>NUCLEOTIDE SEQUENCE [LARGE SCALE GENOMIC DNA]</scope>
    <source>
        <strain>K12 / MG1655 / ATCC 47076</strain>
    </source>
</reference>
<reference key="2">
    <citation type="journal article" date="1997" name="Science">
        <title>The complete genome sequence of Escherichia coli K-12.</title>
        <authorList>
            <person name="Blattner F.R."/>
            <person name="Plunkett G. III"/>
            <person name="Bloch C.A."/>
            <person name="Perna N.T."/>
            <person name="Burland V."/>
            <person name="Riley M."/>
            <person name="Collado-Vides J."/>
            <person name="Glasner J.D."/>
            <person name="Rode C.K."/>
            <person name="Mayhew G.F."/>
            <person name="Gregor J."/>
            <person name="Davis N.W."/>
            <person name="Kirkpatrick H.A."/>
            <person name="Goeden M.A."/>
            <person name="Rose D.J."/>
            <person name="Mau B."/>
            <person name="Shao Y."/>
        </authorList>
    </citation>
    <scope>NUCLEOTIDE SEQUENCE [LARGE SCALE GENOMIC DNA]</scope>
    <source>
        <strain>K12 / MG1655 / ATCC 47076</strain>
    </source>
</reference>
<reference key="3">
    <citation type="journal article" date="2006" name="Mol. Syst. Biol.">
        <title>Highly accurate genome sequences of Escherichia coli K-12 strains MG1655 and W3110.</title>
        <authorList>
            <person name="Hayashi K."/>
            <person name="Morooka N."/>
            <person name="Yamamoto Y."/>
            <person name="Fujita K."/>
            <person name="Isono K."/>
            <person name="Choi S."/>
            <person name="Ohtsubo E."/>
            <person name="Baba T."/>
            <person name="Wanner B.L."/>
            <person name="Mori H."/>
            <person name="Horiuchi T."/>
        </authorList>
    </citation>
    <scope>NUCLEOTIDE SEQUENCE [LARGE SCALE GENOMIC DNA]</scope>
    <source>
        <strain>K12 / W3110 / ATCC 27325 / DSM 5911</strain>
    </source>
</reference>
<reference key="4">
    <citation type="journal article" date="1975" name="J. Bacteriol.">
        <title>Properties of alpha-dehydrobiotin-resistant mutants of Escherichia coli K-12.</title>
        <authorList>
            <person name="Eisenburg M.A."/>
            <person name="Mee B."/>
            <person name="Prakash O."/>
            <person name="Eisenburg M.R."/>
        </authorList>
    </citation>
    <scope>DISRUPTION PHENOTYPE</scope>
    <scope>GENE NAME</scope>
</reference>
<reference key="5">
    <citation type="thesis" date="2011" institute="University of Regensburg" country="Germany">
        <title>Identification of the biotin transporter in Escherichia coli, biotinylation of histones in Saccharomyces cerevisiae and analysis of biotin sensing in Saccharomyces cerevisiae.</title>
        <authorList>
            <person name="Ringlstetter S.L."/>
        </authorList>
    </citation>
    <scope>FUNCTION</scope>
    <scope>ACTIVITY REGULATION</scope>
    <scope>BIOPHYSICOCHEMICAL PROPERTIES</scope>
    <scope>SUBCELLULAR LOCATION</scope>
    <scope>INDUCTION</scope>
    <scope>DISRUPTION PHENOTYPE</scope>
</reference>
<reference key="6">
    <citation type="journal article" date="2014" name="Bioengineered">
        <title>A versatile Escherichia coli strain for identification of biotin transporters and for biotin quantification.</title>
        <authorList>
            <person name="Finkenwirth F."/>
            <person name="Kirsch F."/>
            <person name="Eitinger T."/>
        </authorList>
    </citation>
    <scope>DISRUPTION PHENOTYPE</scope>
</reference>
<sequence length="299" mass="33727">MALLIITTILWAFSFSFYGEYLAGHVDSYFAVLVRVGLAALVFLPFLRTRGNSLKTVGLYMLVGAMQLGVMYMLSFRAYLYLTVSELLLFTVLTPLYITLIYDIMSKRRLRWGYAFSALLAVIGAGIIRYDQVTDHFWTGLLLVQLSNITFAIGMVGYKRLMETRPMPQHNAFAWFYLGAFLVAVIAWFLLGNAQKMPQTTLQWGILVFLGVVASGIGYFMWNYGATQVDAGTLGIMNNMHVPAGLLVNLAIWHQQPHWPTFITGALVILASLWVHRKWVAPRSSQTADDRRRDCALSE</sequence>
<feature type="chain" id="PRO_0000169663" description="Biotin transporter">
    <location>
        <begin position="1"/>
        <end position="299"/>
    </location>
</feature>
<feature type="transmembrane region" description="Helical" evidence="1">
    <location>
        <begin position="2"/>
        <end position="22"/>
    </location>
</feature>
<feature type="transmembrane region" description="Helical" evidence="1">
    <location>
        <begin position="26"/>
        <end position="46"/>
    </location>
</feature>
<feature type="transmembrane region" description="Helical" evidence="1">
    <location>
        <begin position="56"/>
        <end position="76"/>
    </location>
</feature>
<feature type="transmembrane region" description="Helical" evidence="1">
    <location>
        <begin position="81"/>
        <end position="101"/>
    </location>
</feature>
<feature type="transmembrane region" description="Helical" evidence="1">
    <location>
        <begin position="110"/>
        <end position="130"/>
    </location>
</feature>
<feature type="transmembrane region" description="Helical" evidence="1">
    <location>
        <begin position="137"/>
        <end position="157"/>
    </location>
</feature>
<feature type="transmembrane region" description="Helical" evidence="1">
    <location>
        <begin position="172"/>
        <end position="192"/>
    </location>
</feature>
<feature type="transmembrane region" description="Helical" evidence="1">
    <location>
        <begin position="202"/>
        <end position="222"/>
    </location>
</feature>
<feature type="transmembrane region" description="Helical" evidence="1">
    <location>
        <begin position="233"/>
        <end position="253"/>
    </location>
</feature>
<feature type="transmembrane region" description="Helical" evidence="1">
    <location>
        <begin position="256"/>
        <end position="276"/>
    </location>
</feature>
<feature type="domain" description="EamA 1" evidence="1">
    <location>
        <begin position="3"/>
        <end position="128"/>
    </location>
</feature>
<feature type="domain" description="EamA 2" evidence="1">
    <location>
        <begin position="139"/>
        <end position="274"/>
    </location>
</feature>
<keyword id="KW-0997">Cell inner membrane</keyword>
<keyword id="KW-1003">Cell membrane</keyword>
<keyword id="KW-0472">Membrane</keyword>
<keyword id="KW-1185">Reference proteome</keyword>
<keyword id="KW-0677">Repeat</keyword>
<keyword id="KW-0812">Transmembrane</keyword>
<keyword id="KW-1133">Transmembrane helix</keyword>
<keyword id="KW-0813">Transport</keyword>
<comment type="function">
    <text evidence="4">Uptake of biotin. Acts probably by facilitated diffusion.</text>
</comment>
<comment type="catalytic activity">
    <reaction evidence="8">
        <text>biotin(in) = biotin(out)</text>
        <dbReference type="Rhea" id="RHEA:28458"/>
        <dbReference type="ChEBI" id="CHEBI:57586"/>
    </reaction>
    <physiologicalReaction direction="right-to-left" evidence="8">
        <dbReference type="Rhea" id="RHEA:28460"/>
    </physiologicalReaction>
</comment>
<comment type="activity regulation">
    <text evidence="4">Biotin uptake is weakly inhibited by CCCP and FCCP protonophores and by the respiratory chain blocker NaN(3).</text>
</comment>
<comment type="biophysicochemical properties">
    <kinetics>
        <KM evidence="4">74 nM for biotin</KM>
    </kinetics>
</comment>
<comment type="subcellular location">
    <subcellularLocation>
        <location evidence="4">Cell inner membrane</location>
        <topology evidence="1">Multi-pass membrane protein</topology>
    </subcellularLocation>
</comment>
<comment type="induction">
    <text evidence="4">Expression is repressed by biotin.</text>
</comment>
<comment type="disruption phenotype">
    <text evidence="2 3 4">Deletion of the gene abolishes biotin uptake (PubMed:1091631, Ref.5). BioH-bioP double mutant is unable to grow on trace levels of biotin (PubMed:24256712).</text>
</comment>
<comment type="similarity">
    <text evidence="7">Belongs to the drug/metabolite transporter (DMT) superfamily. 10 TMS drug/metabolite exporter (DME) (TC 2.A.7.3) family.</text>
</comment>
<gene>
    <name evidence="5" type="primary">bioP</name>
    <name type="synonym">yigM</name>
    <name type="ordered locus">b3827</name>
    <name type="ordered locus">JW3803</name>
</gene>
<proteinExistence type="evidence at protein level"/>
<evidence type="ECO:0000255" key="1"/>
<evidence type="ECO:0000269" key="2">
    <source>
    </source>
</evidence>
<evidence type="ECO:0000269" key="3">
    <source>
    </source>
</evidence>
<evidence type="ECO:0000269" key="4">
    <source ref="5"/>
</evidence>
<evidence type="ECO:0000303" key="5">
    <source>
    </source>
</evidence>
<evidence type="ECO:0000303" key="6">
    <source ref="5"/>
</evidence>
<evidence type="ECO:0000305" key="7"/>
<evidence type="ECO:0000305" key="8">
    <source ref="5"/>
</evidence>
<name>BIOP_ECOLI</name>
<dbReference type="EMBL" id="M87049">
    <property type="protein sequence ID" value="AAA67623.1"/>
    <property type="molecule type" value="Genomic_DNA"/>
</dbReference>
<dbReference type="EMBL" id="U00096">
    <property type="protein sequence ID" value="AAC76830.1"/>
    <property type="molecule type" value="Genomic_DNA"/>
</dbReference>
<dbReference type="EMBL" id="AP009048">
    <property type="protein sequence ID" value="BAE77474.1"/>
    <property type="molecule type" value="Genomic_DNA"/>
</dbReference>
<dbReference type="PIR" id="D65187">
    <property type="entry name" value="D65187"/>
</dbReference>
<dbReference type="RefSeq" id="NP_418271.1">
    <property type="nucleotide sequence ID" value="NC_000913.3"/>
</dbReference>
<dbReference type="RefSeq" id="WP_001196238.1">
    <property type="nucleotide sequence ID" value="NZ_STEB01000021.1"/>
</dbReference>
<dbReference type="SMR" id="P0ADP5"/>
<dbReference type="BioGRID" id="4259475">
    <property type="interactions" value="5"/>
</dbReference>
<dbReference type="FunCoup" id="P0ADP5">
    <property type="interactions" value="31"/>
</dbReference>
<dbReference type="STRING" id="511145.b3827"/>
<dbReference type="TCDB" id="2.A.7.3.61">
    <property type="family name" value="the drug/metabolite transporter (dmt) superfamily"/>
</dbReference>
<dbReference type="PaxDb" id="511145-b3827"/>
<dbReference type="EnsemblBacteria" id="AAC76830">
    <property type="protein sequence ID" value="AAC76830"/>
    <property type="gene ID" value="b3827"/>
</dbReference>
<dbReference type="GeneID" id="93778110"/>
<dbReference type="GeneID" id="948309"/>
<dbReference type="KEGG" id="ecj:JW3803"/>
<dbReference type="KEGG" id="eco:b3827"/>
<dbReference type="PATRIC" id="fig|511145.12.peg.3943"/>
<dbReference type="EchoBASE" id="EB1439"/>
<dbReference type="eggNOG" id="COG0697">
    <property type="taxonomic scope" value="Bacteria"/>
</dbReference>
<dbReference type="HOGENOM" id="CLU_085269_0_0_6"/>
<dbReference type="InParanoid" id="P0ADP5"/>
<dbReference type="OMA" id="HTAFSWF"/>
<dbReference type="PhylomeDB" id="P0ADP5"/>
<dbReference type="BioCyc" id="EcoCyc:EG11471-MONOMER"/>
<dbReference type="BioCyc" id="MetaCyc:EG11471-MONOMER"/>
<dbReference type="PRO" id="PR:P0ADP5"/>
<dbReference type="Proteomes" id="UP000000625">
    <property type="component" value="Chromosome"/>
</dbReference>
<dbReference type="GO" id="GO:0016020">
    <property type="term" value="C:membrane"/>
    <property type="evidence" value="ECO:0000318"/>
    <property type="project" value="GO_Central"/>
</dbReference>
<dbReference type="GO" id="GO:0005886">
    <property type="term" value="C:plasma membrane"/>
    <property type="evidence" value="ECO:0000314"/>
    <property type="project" value="EcoCyc"/>
</dbReference>
<dbReference type="InterPro" id="IPR004779">
    <property type="entry name" value="CO/AA/NH_transpt"/>
</dbReference>
<dbReference type="InterPro" id="IPR051258">
    <property type="entry name" value="Diverse_Substrate_Transporter"/>
</dbReference>
<dbReference type="InterPro" id="IPR000620">
    <property type="entry name" value="EamA_dom"/>
</dbReference>
<dbReference type="NCBIfam" id="TIGR00950">
    <property type="entry name" value="2A78"/>
    <property type="match status" value="1"/>
</dbReference>
<dbReference type="PANTHER" id="PTHR42920:SF11">
    <property type="entry name" value="INNER MEMBRANE PROTEIN YTFF"/>
    <property type="match status" value="1"/>
</dbReference>
<dbReference type="PANTHER" id="PTHR42920">
    <property type="entry name" value="OS03G0707200 PROTEIN-RELATED"/>
    <property type="match status" value="1"/>
</dbReference>
<dbReference type="Pfam" id="PF00892">
    <property type="entry name" value="EamA"/>
    <property type="match status" value="2"/>
</dbReference>
<dbReference type="SUPFAM" id="SSF103481">
    <property type="entry name" value="Multidrug resistance efflux transporter EmrE"/>
    <property type="match status" value="2"/>
</dbReference>
<organism>
    <name type="scientific">Escherichia coli (strain K12)</name>
    <dbReference type="NCBI Taxonomy" id="83333"/>
    <lineage>
        <taxon>Bacteria</taxon>
        <taxon>Pseudomonadati</taxon>
        <taxon>Pseudomonadota</taxon>
        <taxon>Gammaproteobacteria</taxon>
        <taxon>Enterobacterales</taxon>
        <taxon>Enterobacteriaceae</taxon>
        <taxon>Escherichia</taxon>
    </lineage>
</organism>